<protein>
    <recommendedName>
        <fullName evidence="1">Deoxyribose-phosphate aldolase</fullName>
        <shortName evidence="1">DERA</shortName>
        <ecNumber evidence="1">4.1.2.4</ecNumber>
    </recommendedName>
    <alternativeName>
        <fullName evidence="1">2-deoxy-D-ribose 5-phosphate aldolase</fullName>
    </alternativeName>
    <alternativeName>
        <fullName evidence="1">Phosphodeoxyriboaldolase</fullName>
        <shortName evidence="1">Deoxyriboaldolase</shortName>
    </alternativeName>
</protein>
<feature type="chain" id="PRO_1000094847" description="Deoxyribose-phosphate aldolase">
    <location>
        <begin position="1"/>
        <end position="212"/>
    </location>
</feature>
<feature type="active site" description="Proton donor/acceptor" evidence="1">
    <location>
        <position position="90"/>
    </location>
</feature>
<feature type="active site" description="Schiff-base intermediate with acetaldehyde" evidence="1">
    <location>
        <position position="151"/>
    </location>
</feature>
<feature type="active site" description="Proton donor/acceptor" evidence="1">
    <location>
        <position position="176"/>
    </location>
</feature>
<accession>B0R6I6</accession>
<comment type="function">
    <text evidence="1">Catalyzes a reversible aldol reaction between acetaldehyde and D-glyceraldehyde 3-phosphate to generate 2-deoxy-D-ribose 5-phosphate.</text>
</comment>
<comment type="catalytic activity">
    <reaction evidence="1">
        <text>2-deoxy-D-ribose 5-phosphate = D-glyceraldehyde 3-phosphate + acetaldehyde</text>
        <dbReference type="Rhea" id="RHEA:12821"/>
        <dbReference type="ChEBI" id="CHEBI:15343"/>
        <dbReference type="ChEBI" id="CHEBI:59776"/>
        <dbReference type="ChEBI" id="CHEBI:62877"/>
        <dbReference type="EC" id="4.1.2.4"/>
    </reaction>
</comment>
<comment type="pathway">
    <text evidence="1">Carbohydrate degradation; 2-deoxy-D-ribose 1-phosphate degradation; D-glyceraldehyde 3-phosphate and acetaldehyde from 2-deoxy-alpha-D-ribose 1-phosphate: step 2/2.</text>
</comment>
<comment type="subcellular location">
    <subcellularLocation>
        <location evidence="1">Cytoplasm</location>
    </subcellularLocation>
</comment>
<comment type="similarity">
    <text evidence="1">Belongs to the DeoC/FbaB aldolase family. DeoC type 1 subfamily.</text>
</comment>
<evidence type="ECO:0000255" key="1">
    <source>
        <dbReference type="HAMAP-Rule" id="MF_00114"/>
    </source>
</evidence>
<organism>
    <name type="scientific">Halobacterium salinarum (strain ATCC 29341 / DSM 671 / R1)</name>
    <dbReference type="NCBI Taxonomy" id="478009"/>
    <lineage>
        <taxon>Archaea</taxon>
        <taxon>Methanobacteriati</taxon>
        <taxon>Methanobacteriota</taxon>
        <taxon>Stenosarchaea group</taxon>
        <taxon>Halobacteria</taxon>
        <taxon>Halobacteriales</taxon>
        <taxon>Halobacteriaceae</taxon>
        <taxon>Halobacterium</taxon>
        <taxon>Halobacterium salinarum NRC-34001</taxon>
    </lineage>
</organism>
<dbReference type="EC" id="4.1.2.4" evidence="1"/>
<dbReference type="EMBL" id="AM774415">
    <property type="protein sequence ID" value="CAP14355.1"/>
    <property type="molecule type" value="Genomic_DNA"/>
</dbReference>
<dbReference type="RefSeq" id="WP_010903361.1">
    <property type="nucleotide sequence ID" value="NC_010364.1"/>
</dbReference>
<dbReference type="SMR" id="B0R6I6"/>
<dbReference type="EnsemblBacteria" id="CAP14355">
    <property type="protein sequence ID" value="CAP14355"/>
    <property type="gene ID" value="OE_3616F"/>
</dbReference>
<dbReference type="GeneID" id="68694482"/>
<dbReference type="KEGG" id="hsl:OE_3616F"/>
<dbReference type="HOGENOM" id="CLU_053595_0_1_2"/>
<dbReference type="PhylomeDB" id="B0R6I6"/>
<dbReference type="UniPathway" id="UPA00002">
    <property type="reaction ID" value="UER00468"/>
</dbReference>
<dbReference type="Proteomes" id="UP000001321">
    <property type="component" value="Chromosome"/>
</dbReference>
<dbReference type="GO" id="GO:0005737">
    <property type="term" value="C:cytoplasm"/>
    <property type="evidence" value="ECO:0007669"/>
    <property type="project" value="UniProtKB-SubCell"/>
</dbReference>
<dbReference type="GO" id="GO:0004139">
    <property type="term" value="F:deoxyribose-phosphate aldolase activity"/>
    <property type="evidence" value="ECO:0007669"/>
    <property type="project" value="UniProtKB-UniRule"/>
</dbReference>
<dbReference type="GO" id="GO:0006018">
    <property type="term" value="P:2-deoxyribose 1-phosphate catabolic process"/>
    <property type="evidence" value="ECO:0007669"/>
    <property type="project" value="UniProtKB-UniRule"/>
</dbReference>
<dbReference type="GO" id="GO:0016052">
    <property type="term" value="P:carbohydrate catabolic process"/>
    <property type="evidence" value="ECO:0007669"/>
    <property type="project" value="TreeGrafter"/>
</dbReference>
<dbReference type="GO" id="GO:0009264">
    <property type="term" value="P:deoxyribonucleotide catabolic process"/>
    <property type="evidence" value="ECO:0007669"/>
    <property type="project" value="InterPro"/>
</dbReference>
<dbReference type="CDD" id="cd00959">
    <property type="entry name" value="DeoC"/>
    <property type="match status" value="1"/>
</dbReference>
<dbReference type="FunFam" id="3.20.20.70:FF:000044">
    <property type="entry name" value="Deoxyribose-phosphate aldolase"/>
    <property type="match status" value="1"/>
</dbReference>
<dbReference type="Gene3D" id="3.20.20.70">
    <property type="entry name" value="Aldolase class I"/>
    <property type="match status" value="1"/>
</dbReference>
<dbReference type="HAMAP" id="MF_00114">
    <property type="entry name" value="DeoC_type1"/>
    <property type="match status" value="1"/>
</dbReference>
<dbReference type="InterPro" id="IPR013785">
    <property type="entry name" value="Aldolase_TIM"/>
</dbReference>
<dbReference type="InterPro" id="IPR011343">
    <property type="entry name" value="DeoC"/>
</dbReference>
<dbReference type="InterPro" id="IPR002915">
    <property type="entry name" value="DeoC/FbaB/LacD_aldolase"/>
</dbReference>
<dbReference type="InterPro" id="IPR028581">
    <property type="entry name" value="DeoC_typeI"/>
</dbReference>
<dbReference type="NCBIfam" id="TIGR00126">
    <property type="entry name" value="deoC"/>
    <property type="match status" value="1"/>
</dbReference>
<dbReference type="PANTHER" id="PTHR10889">
    <property type="entry name" value="DEOXYRIBOSE-PHOSPHATE ALDOLASE"/>
    <property type="match status" value="1"/>
</dbReference>
<dbReference type="PANTHER" id="PTHR10889:SF1">
    <property type="entry name" value="DEOXYRIBOSE-PHOSPHATE ALDOLASE"/>
    <property type="match status" value="1"/>
</dbReference>
<dbReference type="Pfam" id="PF01791">
    <property type="entry name" value="DeoC"/>
    <property type="match status" value="1"/>
</dbReference>
<dbReference type="PIRSF" id="PIRSF001357">
    <property type="entry name" value="DeoC"/>
    <property type="match status" value="1"/>
</dbReference>
<dbReference type="SMART" id="SM01133">
    <property type="entry name" value="DeoC"/>
    <property type="match status" value="1"/>
</dbReference>
<dbReference type="SUPFAM" id="SSF51569">
    <property type="entry name" value="Aldolase"/>
    <property type="match status" value="1"/>
</dbReference>
<name>DEOC_HALS3</name>
<reference key="1">
    <citation type="journal article" date="2008" name="Genomics">
        <title>Evolution in the laboratory: the genome of Halobacterium salinarum strain R1 compared to that of strain NRC-1.</title>
        <authorList>
            <person name="Pfeiffer F."/>
            <person name="Schuster S.C."/>
            <person name="Broicher A."/>
            <person name="Falb M."/>
            <person name="Palm P."/>
            <person name="Rodewald K."/>
            <person name="Ruepp A."/>
            <person name="Soppa J."/>
            <person name="Tittor J."/>
            <person name="Oesterhelt D."/>
        </authorList>
    </citation>
    <scope>NUCLEOTIDE SEQUENCE [LARGE SCALE GENOMIC DNA]</scope>
    <source>
        <strain>ATCC 29341 / DSM 671 / R1</strain>
    </source>
</reference>
<sequence length="212" mass="21472">MDRETLAARIDHTVLGPTTTRADVLSVVDDAEAHGMNVCIPPCYVADARDHASADRTIATVIGFPHGTQATSVKVAAAEHAHADGADELDLVIPIGRLKGGDHEAVTAEIAAVNDATPLPVKVIIETPVLTDAEKHAACEAAADADAAMVKTATGFTDGGATVPDVSLMSEYLPVKASGGVGTYADAAAMFDAGAVRIGASSGVDIVASFAE</sequence>
<keyword id="KW-0963">Cytoplasm</keyword>
<keyword id="KW-0456">Lyase</keyword>
<keyword id="KW-0704">Schiff base</keyword>
<gene>
    <name evidence="1" type="primary">deoC</name>
    <name type="ordered locus">OE_3616F</name>
</gene>
<proteinExistence type="inferred from homology"/>